<accession>Q13495</accession>
<accession>B2RCQ4</accession>
<accession>B4DG93</accession>
<accession>B9EGA5</accession>
<organism>
    <name type="scientific">Homo sapiens</name>
    <name type="common">Human</name>
    <dbReference type="NCBI Taxonomy" id="9606"/>
    <lineage>
        <taxon>Eukaryota</taxon>
        <taxon>Metazoa</taxon>
        <taxon>Chordata</taxon>
        <taxon>Craniata</taxon>
        <taxon>Vertebrata</taxon>
        <taxon>Euteleostomi</taxon>
        <taxon>Mammalia</taxon>
        <taxon>Eutheria</taxon>
        <taxon>Euarchontoglires</taxon>
        <taxon>Primates</taxon>
        <taxon>Haplorrhini</taxon>
        <taxon>Catarrhini</taxon>
        <taxon>Hominidae</taxon>
        <taxon>Homo</taxon>
    </lineage>
</organism>
<feature type="chain" id="PRO_0000089592" description="Mastermind-like domain-containing protein 1">
    <location>
        <begin position="1"/>
        <end position="774"/>
    </location>
</feature>
<feature type="region of interest" description="Disordered" evidence="1">
    <location>
        <begin position="257"/>
        <end position="279"/>
    </location>
</feature>
<feature type="region of interest" description="Disordered" evidence="1">
    <location>
        <begin position="310"/>
        <end position="365"/>
    </location>
</feature>
<feature type="region of interest" description="Disordered" evidence="1">
    <location>
        <begin position="386"/>
        <end position="421"/>
    </location>
</feature>
<feature type="region of interest" description="Disordered" evidence="1">
    <location>
        <begin position="442"/>
        <end position="473"/>
    </location>
</feature>
<feature type="region of interest" description="Disordered" evidence="1">
    <location>
        <begin position="525"/>
        <end position="609"/>
    </location>
</feature>
<feature type="region of interest" description="Disordered" evidence="1">
    <location>
        <begin position="656"/>
        <end position="678"/>
    </location>
</feature>
<feature type="region of interest" description="Disordered" evidence="1">
    <location>
        <begin position="755"/>
        <end position="774"/>
    </location>
</feature>
<feature type="compositionally biased region" description="Pro residues" evidence="1">
    <location>
        <begin position="331"/>
        <end position="361"/>
    </location>
</feature>
<feature type="compositionally biased region" description="Polar residues" evidence="1">
    <location>
        <begin position="386"/>
        <end position="397"/>
    </location>
</feature>
<feature type="compositionally biased region" description="Low complexity" evidence="1">
    <location>
        <begin position="574"/>
        <end position="609"/>
    </location>
</feature>
<feature type="compositionally biased region" description="Polar residues" evidence="1">
    <location>
        <begin position="656"/>
        <end position="669"/>
    </location>
</feature>
<feature type="modified residue" description="Phosphoserine" evidence="7 8">
    <location>
        <position position="676"/>
    </location>
</feature>
<feature type="splice variant" id="VSP_037654" description="In isoform 2 and isoform 3." evidence="4 5">
    <location>
        <begin position="33"/>
        <end position="57"/>
    </location>
</feature>
<feature type="splice variant" id="VSP_037655" description="In isoform 2." evidence="4">
    <original>GCCHLFAWTSAASSVKPQHQHGNSFTSRQDPQPGDVSPSNITHVDKACKLGEARHPQVSLGRQPPSCQALGSESFLPGSSFAHELARVTSSYSTSEAAPWGSWDPKAWRQVPAPLLPSCDATARGTEIRSYGNDP</original>
    <variation>QEEQRSGLMAMTPERQNAYISQQMSPFEAVQEQVTSKCSRIKASPPSSKHLMPPRTGLLQNNLSPGMIPLTRHQSCEGMGVISPTLGKRQGIFTSSPQCPILSHSGQTPLGRLDSVCQHMQSPKATPPEVPLPGFCPSSLGTQSLSPHQLRRPSVPRMPTAFNNAAWVTAAAAVTTAVSGKTPLSQVDNSVQQHSPSGQACLQRPSDWEAQVPAAMGTQVPLANNPSFSLLGSQSLRQSPVQGPVPVANTTKFLQQGMASFSPLSPIQGIEPPSYVAAAATAAAASAVAASQFPGPFDRTDIPPELPPADFLRQPQPPLNDLISSPDCNEVDFIEALLKGSCVSPDEDWVCNLRLIDDILEQHAAAQNATAQNSGQVTQDAGAL</variation>
    <location>
        <begin position="640"/>
        <end position="774"/>
    </location>
</feature>
<feature type="sequence variant" id="VAR_030024" description="In dbSNP:rs41313406." evidence="2">
    <original>P</original>
    <variation>S</variation>
    <location>
        <position position="359"/>
    </location>
</feature>
<feature type="sequence variant" id="VAR_030025" evidence="2">
    <original>Q</original>
    <variation>R</variation>
    <location>
        <position position="580"/>
    </location>
</feature>
<feature type="sequence variant" id="VAR_020273" description="In dbSNP:rs2073043." evidence="2">
    <original>N</original>
    <variation>S</variation>
    <location>
        <position position="662"/>
    </location>
</feature>
<feature type="mutagenesis site" description="Reduces transcriptional activation of the HES3 promoter." evidence="3">
    <original>L</original>
    <variation>P</variation>
    <location>
        <position position="176"/>
    </location>
</feature>
<feature type="sequence conflict" description="In Ref. 1; AAC50551." evidence="6" ref="1">
    <original>K</original>
    <variation>N</variation>
    <location>
        <position position="61"/>
    </location>
</feature>
<feature type="sequence conflict" description="In Ref. 1; AAC50551." evidence="6" ref="1">
    <original>Y</original>
    <variation>S</variation>
    <location>
        <position position="340"/>
    </location>
</feature>
<feature type="sequence conflict" description="In Ref. 1; AAC50551." evidence="6" ref="1">
    <original>PH</original>
    <variation>LQ</variation>
    <location>
        <begin position="346"/>
        <end position="347"/>
    </location>
</feature>
<feature type="sequence conflict" description="In Ref. 2; BAG37651." evidence="6" ref="2">
    <original>M</original>
    <variation>T</variation>
    <location>
        <position position="520"/>
    </location>
</feature>
<feature type="sequence conflict" description="In Ref. 1; AAC50551." evidence="6" ref="1">
    <original>G</original>
    <variation>V</variation>
    <location>
        <position position="640"/>
    </location>
</feature>
<proteinExistence type="evidence at protein level"/>
<gene>
    <name type="primary">MAMLD1</name>
    <name type="synonym">CG1</name>
    <name type="synonym">CXorf6</name>
</gene>
<dbReference type="EMBL" id="U46023">
    <property type="protein sequence ID" value="AAC50551.1"/>
    <property type="status" value="ALT_FRAME"/>
    <property type="molecule type" value="mRNA"/>
</dbReference>
<dbReference type="EMBL" id="AK294478">
    <property type="protein sequence ID" value="BAG57704.1"/>
    <property type="molecule type" value="mRNA"/>
</dbReference>
<dbReference type="EMBL" id="AK315217">
    <property type="protein sequence ID" value="BAG37651.1"/>
    <property type="status" value="ALT_INIT"/>
    <property type="molecule type" value="mRNA"/>
</dbReference>
<dbReference type="EMBL" id="AC109994">
    <property type="status" value="NOT_ANNOTATED_CDS"/>
    <property type="molecule type" value="Genomic_DNA"/>
</dbReference>
<dbReference type="EMBL" id="AL034384">
    <property type="status" value="NOT_ANNOTATED_CDS"/>
    <property type="molecule type" value="Genomic_DNA"/>
</dbReference>
<dbReference type="EMBL" id="BC136324">
    <property type="protein sequence ID" value="AAI36325.1"/>
    <property type="molecule type" value="mRNA"/>
</dbReference>
<dbReference type="CCDS" id="CCDS14693.2">
    <molecule id="Q13495-1"/>
</dbReference>
<dbReference type="CCDS" id="CCDS55525.1">
    <molecule id="Q13495-4"/>
</dbReference>
<dbReference type="CCDS" id="CCDS55526.1">
    <molecule id="Q13495-3"/>
</dbReference>
<dbReference type="RefSeq" id="NP_001170936.1">
    <molecule id="Q13495-3"/>
    <property type="nucleotide sequence ID" value="NM_001177465.3"/>
</dbReference>
<dbReference type="RefSeq" id="NP_001170937.1">
    <molecule id="Q13495-4"/>
    <property type="nucleotide sequence ID" value="NM_001177466.3"/>
</dbReference>
<dbReference type="RefSeq" id="NP_001387444.1">
    <molecule id="Q13495-1"/>
    <property type="nucleotide sequence ID" value="NM_001400515.1"/>
</dbReference>
<dbReference type="RefSeq" id="NP_005482.2">
    <molecule id="Q13495-1"/>
    <property type="nucleotide sequence ID" value="NM_005491.5"/>
</dbReference>
<dbReference type="RefSeq" id="XP_006724865.1">
    <property type="nucleotide sequence ID" value="XM_006724802.3"/>
</dbReference>
<dbReference type="RefSeq" id="XP_006724866.1">
    <property type="nucleotide sequence ID" value="XM_006724803.3"/>
</dbReference>
<dbReference type="RefSeq" id="XP_016884677.1">
    <property type="nucleotide sequence ID" value="XM_017029188.1"/>
</dbReference>
<dbReference type="BioGRID" id="115357">
    <property type="interactions" value="5"/>
</dbReference>
<dbReference type="FunCoup" id="Q13495">
    <property type="interactions" value="585"/>
</dbReference>
<dbReference type="IntAct" id="Q13495">
    <property type="interactions" value="2"/>
</dbReference>
<dbReference type="STRING" id="9606.ENSP00000414517"/>
<dbReference type="GlyCosmos" id="Q13495">
    <property type="glycosylation" value="3 sites, 1 glycan"/>
</dbReference>
<dbReference type="GlyGen" id="Q13495">
    <property type="glycosylation" value="13 sites, 1 O-linked glycan (9 sites)"/>
</dbReference>
<dbReference type="iPTMnet" id="Q13495"/>
<dbReference type="PhosphoSitePlus" id="Q13495"/>
<dbReference type="BioMuta" id="MAMLD1"/>
<dbReference type="DMDM" id="215274020"/>
<dbReference type="MassIVE" id="Q13495"/>
<dbReference type="PaxDb" id="9606-ENSP00000414517"/>
<dbReference type="PeptideAtlas" id="Q13495"/>
<dbReference type="ProteomicsDB" id="59492">
    <molecule id="Q13495-1"/>
</dbReference>
<dbReference type="ProteomicsDB" id="59493">
    <molecule id="Q13495-3"/>
</dbReference>
<dbReference type="ProteomicsDB" id="59494">
    <molecule id="Q13495-4"/>
</dbReference>
<dbReference type="Antibodypedia" id="16946">
    <property type="antibodies" value="61 antibodies from 18 providers"/>
</dbReference>
<dbReference type="DNASU" id="10046"/>
<dbReference type="Ensembl" id="ENST00000370401.7">
    <molecule id="Q13495-1"/>
    <property type="protein sequence ID" value="ENSP00000359428.2"/>
    <property type="gene ID" value="ENSG00000013619.15"/>
</dbReference>
<dbReference type="Ensembl" id="ENST00000426613.5">
    <molecule id="Q13495-4"/>
    <property type="protein sequence ID" value="ENSP00000397438.2"/>
    <property type="gene ID" value="ENSG00000013619.15"/>
</dbReference>
<dbReference type="Ensembl" id="ENST00000432680.7">
    <molecule id="Q13495-3"/>
    <property type="protein sequence ID" value="ENSP00000414517.2"/>
    <property type="gene ID" value="ENSG00000013619.15"/>
</dbReference>
<dbReference type="Ensembl" id="ENST00000682253.1">
    <molecule id="Q13495-1"/>
    <property type="protein sequence ID" value="ENSP00000506890.1"/>
    <property type="gene ID" value="ENSG00000013619.15"/>
</dbReference>
<dbReference type="GeneID" id="10046"/>
<dbReference type="KEGG" id="hsa:10046"/>
<dbReference type="MANE-Select" id="ENST00000370401.7">
    <property type="protein sequence ID" value="ENSP00000359428.2"/>
    <property type="RefSeq nucleotide sequence ID" value="NM_005491.5"/>
    <property type="RefSeq protein sequence ID" value="NP_005482.2"/>
</dbReference>
<dbReference type="UCSC" id="uc004fee.2">
    <molecule id="Q13495-1"/>
    <property type="organism name" value="human"/>
</dbReference>
<dbReference type="AGR" id="HGNC:2568"/>
<dbReference type="CTD" id="10046"/>
<dbReference type="DisGeNET" id="10046"/>
<dbReference type="GeneCards" id="MAMLD1"/>
<dbReference type="HGNC" id="HGNC:2568">
    <property type="gene designation" value="MAMLD1"/>
</dbReference>
<dbReference type="HPA" id="ENSG00000013619">
    <property type="expression patterns" value="Low tissue specificity"/>
</dbReference>
<dbReference type="MalaCards" id="MAMLD1"/>
<dbReference type="MIM" id="300120">
    <property type="type" value="gene"/>
</dbReference>
<dbReference type="MIM" id="300758">
    <property type="type" value="phenotype"/>
</dbReference>
<dbReference type="neXtProt" id="NX_Q13495"/>
<dbReference type="OpenTargets" id="ENSG00000013619"/>
<dbReference type="Orphanet" id="95706">
    <property type="disease" value="Non-syndromic posterior hypospadias"/>
</dbReference>
<dbReference type="Orphanet" id="456328">
    <property type="disease" value="X-linked myotubular myopathy-abnormal genitalia syndrome"/>
</dbReference>
<dbReference type="PharmGKB" id="PA162394950"/>
<dbReference type="VEuPathDB" id="HostDB:ENSG00000013619"/>
<dbReference type="eggNOG" id="ENOG502QV1F">
    <property type="taxonomic scope" value="Eukaryota"/>
</dbReference>
<dbReference type="GeneTree" id="ENSGT00730000111366"/>
<dbReference type="HOGENOM" id="CLU_298909_0_0_1"/>
<dbReference type="InParanoid" id="Q13495"/>
<dbReference type="OMA" id="FNNAAWV"/>
<dbReference type="OrthoDB" id="8630229at2759"/>
<dbReference type="PAN-GO" id="Q13495">
    <property type="GO annotations" value="2 GO annotations based on evolutionary models"/>
</dbReference>
<dbReference type="PhylomeDB" id="Q13495"/>
<dbReference type="TreeFam" id="TF332922"/>
<dbReference type="PathwayCommons" id="Q13495"/>
<dbReference type="Reactome" id="R-HSA-1912408">
    <property type="pathway name" value="Pre-NOTCH Transcription and Translation"/>
</dbReference>
<dbReference type="Reactome" id="R-HSA-210744">
    <property type="pathway name" value="Regulation of gene expression in late stage (branching morphogenesis) pancreatic bud precursor cells"/>
</dbReference>
<dbReference type="Reactome" id="R-HSA-2122947">
    <property type="pathway name" value="NOTCH1 Intracellular Domain Regulates Transcription"/>
</dbReference>
<dbReference type="Reactome" id="R-HSA-2197563">
    <property type="pathway name" value="NOTCH2 intracellular domain regulates transcription"/>
</dbReference>
<dbReference type="Reactome" id="R-HSA-2644606">
    <property type="pathway name" value="Constitutive Signaling by NOTCH1 PEST Domain Mutants"/>
</dbReference>
<dbReference type="Reactome" id="R-HSA-2894862">
    <property type="pathway name" value="Constitutive Signaling by NOTCH1 HD+PEST Domain Mutants"/>
</dbReference>
<dbReference type="Reactome" id="R-HSA-350054">
    <property type="pathway name" value="Notch-HLH transcription pathway"/>
</dbReference>
<dbReference type="Reactome" id="R-HSA-8941856">
    <property type="pathway name" value="RUNX3 regulates NOTCH signaling"/>
</dbReference>
<dbReference type="Reactome" id="R-HSA-9013508">
    <property type="pathway name" value="NOTCH3 Intracellular Domain Regulates Transcription"/>
</dbReference>
<dbReference type="Reactome" id="R-HSA-9013695">
    <property type="pathway name" value="NOTCH4 Intracellular Domain Regulates Transcription"/>
</dbReference>
<dbReference type="Reactome" id="R-HSA-9793380">
    <property type="pathway name" value="Formation of paraxial mesoderm"/>
</dbReference>
<dbReference type="SignaLink" id="Q13495"/>
<dbReference type="BioGRID-ORCS" id="10046">
    <property type="hits" value="11 hits in 768 CRISPR screens"/>
</dbReference>
<dbReference type="ChiTaRS" id="MAMLD1">
    <property type="organism name" value="human"/>
</dbReference>
<dbReference type="GenomeRNAi" id="10046"/>
<dbReference type="Pharos" id="Q13495">
    <property type="development level" value="Tbio"/>
</dbReference>
<dbReference type="PRO" id="PR:Q13495"/>
<dbReference type="Proteomes" id="UP000005640">
    <property type="component" value="Chromosome X"/>
</dbReference>
<dbReference type="RNAct" id="Q13495">
    <property type="molecule type" value="protein"/>
</dbReference>
<dbReference type="Bgee" id="ENSG00000013619">
    <property type="expression patterns" value="Expressed in male germ line stem cell (sensu Vertebrata) in testis and 123 other cell types or tissues"/>
</dbReference>
<dbReference type="ExpressionAtlas" id="Q13495">
    <property type="expression patterns" value="baseline and differential"/>
</dbReference>
<dbReference type="GO" id="GO:0005813">
    <property type="term" value="C:centrosome"/>
    <property type="evidence" value="ECO:0000314"/>
    <property type="project" value="HPA"/>
</dbReference>
<dbReference type="GO" id="GO:0005794">
    <property type="term" value="C:Golgi apparatus"/>
    <property type="evidence" value="ECO:0000314"/>
    <property type="project" value="HPA"/>
</dbReference>
<dbReference type="GO" id="GO:0016604">
    <property type="term" value="C:nuclear body"/>
    <property type="evidence" value="ECO:0000314"/>
    <property type="project" value="HPA"/>
</dbReference>
<dbReference type="GO" id="GO:0005654">
    <property type="term" value="C:nucleoplasm"/>
    <property type="evidence" value="ECO:0000314"/>
    <property type="project" value="HPA"/>
</dbReference>
<dbReference type="GO" id="GO:0008584">
    <property type="term" value="P:male gonad development"/>
    <property type="evidence" value="ECO:0000270"/>
    <property type="project" value="UniProtKB"/>
</dbReference>
<dbReference type="GO" id="GO:0006357">
    <property type="term" value="P:regulation of transcription by RNA polymerase II"/>
    <property type="evidence" value="ECO:0000318"/>
    <property type="project" value="GO_Central"/>
</dbReference>
<dbReference type="InterPro" id="IPR026131">
    <property type="entry name" value="MAMLD1"/>
</dbReference>
<dbReference type="PANTHER" id="PTHR15275">
    <property type="entry name" value="CG1 PROTEIN/F18"/>
    <property type="match status" value="1"/>
</dbReference>
<dbReference type="PANTHER" id="PTHR15275:SF1">
    <property type="entry name" value="MASTERMIND-LIKE DOMAIN-CONTAINING PROTEIN 1"/>
    <property type="match status" value="1"/>
</dbReference>
<keyword id="KW-0010">Activator</keyword>
<keyword id="KW-0025">Alternative splicing</keyword>
<keyword id="KW-0539">Nucleus</keyword>
<keyword id="KW-0597">Phosphoprotein</keyword>
<keyword id="KW-1267">Proteomics identification</keyword>
<keyword id="KW-1185">Reference proteome</keyword>
<keyword id="KW-0804">Transcription</keyword>
<keyword id="KW-0805">Transcription regulation</keyword>
<comment type="function">
    <text evidence="3">Transactivates the HES3 promoter independently of NOTCH proteins. HES3 is a non-canonical NOTCH target gene which lacks binding sites for RBPJ.</text>
</comment>
<comment type="subcellular location">
    <subcellularLocation>
        <location evidence="3">Nucleus</location>
    </subcellularLocation>
    <text>Punctate nuclear localization.</text>
</comment>
<comment type="alternative products">
    <event type="alternative splicing"/>
    <isoform>
        <id>Q13495-1</id>
        <name>1</name>
        <sequence type="displayed"/>
    </isoform>
    <isoform>
        <id>Q13495-3</id>
        <name>2</name>
        <sequence type="described" ref="VSP_037654 VSP_037655"/>
    </isoform>
    <isoform>
        <id>Q13495-4</id>
        <name>3</name>
        <sequence type="described" ref="VSP_037654"/>
    </isoform>
</comment>
<comment type="tissue specificity">
    <text evidence="3">Expressed in fetal brain, fetal ovary and fetal testis. Expressed in adult brain, ovary, skin, testis, uterus. Highly expressed in skeletal muscle.</text>
</comment>
<comment type="induction">
    <text evidence="3">By NR5A1.</text>
</comment>
<comment type="disease" evidence="2">
    <disease id="DI-02448">
        <name>Hypospadias 2, X-linked</name>
        <acronym>HYSP2</acronym>
        <description>A common malformation in which the urethra opens on the ventral side of the penis, due to developmental arrest of urethral fusion. The opening can be located glandular, penile, or even more posterior in the scrotum or perineum. Hypospadias is a feature of several syndromic disorders, including the androgen insensitivity syndrome and Opitz syndrome.</description>
        <dbReference type="MIM" id="300758"/>
    </disease>
    <text>The disease is caused by variants affecting the gene represented in this entry.</text>
</comment>
<comment type="similarity">
    <text evidence="6">Belongs to the mastermind family.</text>
</comment>
<comment type="sequence caution" evidence="6">
    <conflict type="frameshift">
        <sequence resource="EMBL-CDS" id="AAC50551"/>
    </conflict>
</comment>
<comment type="sequence caution" evidence="6">
    <conflict type="erroneous initiation">
        <sequence resource="EMBL-CDS" id="BAG37651"/>
    </conflict>
</comment>
<protein>
    <recommendedName>
        <fullName>Mastermind-like domain-containing protein 1</fullName>
    </recommendedName>
    <alternativeName>
        <fullName>F18</fullName>
    </alternativeName>
    <alternativeName>
        <fullName>Protein CG1</fullName>
    </alternativeName>
</protein>
<sequence length="774" mass="83231">MDDWKSRLVIKSMLPHFAMVGNRQEPRKLQESGKKPSWMEEEDLSFLYKSSPGRKHQGTVKRRQEEDHFQFPDMADGGYPNKIKRPCLEDVTLAMGPGAHPSTACAELQVPPLTINPSPAAMGVAGQSLLLENNPMNGNIMGSPFVVPQTTEVGLKGPTVPYYEKINSVPAVDQELQELLEELTKIQDPSPNELDLEKILGTKPEEPLVLDHPQATLSTTPKPSVQMSHLESLASSKEFASSCSQVTGMSLQIPSSSTGISYSIPSTSKQIVSPSSSMAQSKSQVQAMLPVALPPLPVPQWHHAHQLKALAASKQGSATKQQGPTPSWSGLPPPGLSPPYRPVPSPHPPPLPLPPPPPPFSPQSLMVSCMSSNTLSGSTLRGSPNALLSSMTSSSNAALGPAMPYAPEKLPSPALTQQPQFGPQSSILANLMSSTIKTPQGHLMSALPASNPGPSPPYRPEKLSSPGLPQQSFTPQCSLIRSLTPTSNLLSQQQQQQQQQQQANVIFKPISSNSSKTLSMIMQQGMASSSPGATEPFTFGNTKPLSHFVSEPGPQKMPSMPTTSRQPSLLHYLQQPTPTQASSATASSTATATLQLQQQQQQQQQQPDHSSFLLQQMMQQPQRFQRSVASDSMPALPRQGCCHLFAWTSAASSVKPQHQHGNSFTSRQDPQPGDVSPSNITHVDKACKLGEARHPQVSLGRQPPSCQALGSESFLPGSSFAHELARVTSSYSTSEAAPWGSWDPKAWRQVPAPLLPSCDATARGTEIRSYGNDP</sequence>
<reference key="1">
    <citation type="journal article" date="1996" name="Nat. Genet.">
        <title>A gene mutated in X-linked myotubular myopathy defines a new putative tyrosine phosphatase family conserved in yeast.</title>
        <authorList>
            <person name="Laporte J."/>
            <person name="Hu L.-J."/>
            <person name="Kretz C."/>
            <person name="Mandel J.-L."/>
            <person name="Kioschis P."/>
            <person name="Coy J."/>
            <person name="Klauck S.M."/>
            <person name="Poutska A."/>
            <person name="Dahl N."/>
        </authorList>
    </citation>
    <scope>NUCLEOTIDE SEQUENCE [MRNA] (ISOFORM 1)</scope>
</reference>
<reference key="2">
    <citation type="journal article" date="2004" name="Nat. Genet.">
        <title>Complete sequencing and characterization of 21,243 full-length human cDNAs.</title>
        <authorList>
            <person name="Ota T."/>
            <person name="Suzuki Y."/>
            <person name="Nishikawa T."/>
            <person name="Otsuki T."/>
            <person name="Sugiyama T."/>
            <person name="Irie R."/>
            <person name="Wakamatsu A."/>
            <person name="Hayashi K."/>
            <person name="Sato H."/>
            <person name="Nagai K."/>
            <person name="Kimura K."/>
            <person name="Makita H."/>
            <person name="Sekine M."/>
            <person name="Obayashi M."/>
            <person name="Nishi T."/>
            <person name="Shibahara T."/>
            <person name="Tanaka T."/>
            <person name="Ishii S."/>
            <person name="Yamamoto J."/>
            <person name="Saito K."/>
            <person name="Kawai Y."/>
            <person name="Isono Y."/>
            <person name="Nakamura Y."/>
            <person name="Nagahari K."/>
            <person name="Murakami K."/>
            <person name="Yasuda T."/>
            <person name="Iwayanagi T."/>
            <person name="Wagatsuma M."/>
            <person name="Shiratori A."/>
            <person name="Sudo H."/>
            <person name="Hosoiri T."/>
            <person name="Kaku Y."/>
            <person name="Kodaira H."/>
            <person name="Kondo H."/>
            <person name="Sugawara M."/>
            <person name="Takahashi M."/>
            <person name="Kanda K."/>
            <person name="Yokoi T."/>
            <person name="Furuya T."/>
            <person name="Kikkawa E."/>
            <person name="Omura Y."/>
            <person name="Abe K."/>
            <person name="Kamihara K."/>
            <person name="Katsuta N."/>
            <person name="Sato K."/>
            <person name="Tanikawa M."/>
            <person name="Yamazaki M."/>
            <person name="Ninomiya K."/>
            <person name="Ishibashi T."/>
            <person name="Yamashita H."/>
            <person name="Murakawa K."/>
            <person name="Fujimori K."/>
            <person name="Tanai H."/>
            <person name="Kimata M."/>
            <person name="Watanabe M."/>
            <person name="Hiraoka S."/>
            <person name="Chiba Y."/>
            <person name="Ishida S."/>
            <person name="Ono Y."/>
            <person name="Takiguchi S."/>
            <person name="Watanabe S."/>
            <person name="Yosida M."/>
            <person name="Hotuta T."/>
            <person name="Kusano J."/>
            <person name="Kanehori K."/>
            <person name="Takahashi-Fujii A."/>
            <person name="Hara H."/>
            <person name="Tanase T.-O."/>
            <person name="Nomura Y."/>
            <person name="Togiya S."/>
            <person name="Komai F."/>
            <person name="Hara R."/>
            <person name="Takeuchi K."/>
            <person name="Arita M."/>
            <person name="Imose N."/>
            <person name="Musashino K."/>
            <person name="Yuuki H."/>
            <person name="Oshima A."/>
            <person name="Sasaki N."/>
            <person name="Aotsuka S."/>
            <person name="Yoshikawa Y."/>
            <person name="Matsunawa H."/>
            <person name="Ichihara T."/>
            <person name="Shiohata N."/>
            <person name="Sano S."/>
            <person name="Moriya S."/>
            <person name="Momiyama H."/>
            <person name="Satoh N."/>
            <person name="Takami S."/>
            <person name="Terashima Y."/>
            <person name="Suzuki O."/>
            <person name="Nakagawa S."/>
            <person name="Senoh A."/>
            <person name="Mizoguchi H."/>
            <person name="Goto Y."/>
            <person name="Shimizu F."/>
            <person name="Wakebe H."/>
            <person name="Hishigaki H."/>
            <person name="Watanabe T."/>
            <person name="Sugiyama A."/>
            <person name="Takemoto M."/>
            <person name="Kawakami B."/>
            <person name="Yamazaki M."/>
            <person name="Watanabe K."/>
            <person name="Kumagai A."/>
            <person name="Itakura S."/>
            <person name="Fukuzumi Y."/>
            <person name="Fujimori Y."/>
            <person name="Komiyama M."/>
            <person name="Tashiro H."/>
            <person name="Tanigami A."/>
            <person name="Fujiwara T."/>
            <person name="Ono T."/>
            <person name="Yamada K."/>
            <person name="Fujii Y."/>
            <person name="Ozaki K."/>
            <person name="Hirao M."/>
            <person name="Ohmori Y."/>
            <person name="Kawabata A."/>
            <person name="Hikiji T."/>
            <person name="Kobatake N."/>
            <person name="Inagaki H."/>
            <person name="Ikema Y."/>
            <person name="Okamoto S."/>
            <person name="Okitani R."/>
            <person name="Kawakami T."/>
            <person name="Noguchi S."/>
            <person name="Itoh T."/>
            <person name="Shigeta K."/>
            <person name="Senba T."/>
            <person name="Matsumura K."/>
            <person name="Nakajima Y."/>
            <person name="Mizuno T."/>
            <person name="Morinaga M."/>
            <person name="Sasaki M."/>
            <person name="Togashi T."/>
            <person name="Oyama M."/>
            <person name="Hata H."/>
            <person name="Watanabe M."/>
            <person name="Komatsu T."/>
            <person name="Mizushima-Sugano J."/>
            <person name="Satoh T."/>
            <person name="Shirai Y."/>
            <person name="Takahashi Y."/>
            <person name="Nakagawa K."/>
            <person name="Okumura K."/>
            <person name="Nagase T."/>
            <person name="Nomura N."/>
            <person name="Kikuchi H."/>
            <person name="Masuho Y."/>
            <person name="Yamashita R."/>
            <person name="Nakai K."/>
            <person name="Yada T."/>
            <person name="Nakamura Y."/>
            <person name="Ohara O."/>
            <person name="Isogai T."/>
            <person name="Sugano S."/>
        </authorList>
    </citation>
    <scope>NUCLEOTIDE SEQUENCE [LARGE SCALE MRNA] (ISOFORM 2)</scope>
    <scope>NUCLEOTIDE SEQUENCE [LARGE SCALE MRNA] OF 23-774 (ISOFORM 1)</scope>
    <source>
        <tissue>Amygdala</tissue>
        <tissue>Brain</tissue>
    </source>
</reference>
<reference key="3">
    <citation type="journal article" date="2005" name="Nature">
        <title>The DNA sequence of the human X chromosome.</title>
        <authorList>
            <person name="Ross M.T."/>
            <person name="Grafham D.V."/>
            <person name="Coffey A.J."/>
            <person name="Scherer S."/>
            <person name="McLay K."/>
            <person name="Muzny D."/>
            <person name="Platzer M."/>
            <person name="Howell G.R."/>
            <person name="Burrows C."/>
            <person name="Bird C.P."/>
            <person name="Frankish A."/>
            <person name="Lovell F.L."/>
            <person name="Howe K.L."/>
            <person name="Ashurst J.L."/>
            <person name="Fulton R.S."/>
            <person name="Sudbrak R."/>
            <person name="Wen G."/>
            <person name="Jones M.C."/>
            <person name="Hurles M.E."/>
            <person name="Andrews T.D."/>
            <person name="Scott C.E."/>
            <person name="Searle S."/>
            <person name="Ramser J."/>
            <person name="Whittaker A."/>
            <person name="Deadman R."/>
            <person name="Carter N.P."/>
            <person name="Hunt S.E."/>
            <person name="Chen R."/>
            <person name="Cree A."/>
            <person name="Gunaratne P."/>
            <person name="Havlak P."/>
            <person name="Hodgson A."/>
            <person name="Metzker M.L."/>
            <person name="Richards S."/>
            <person name="Scott G."/>
            <person name="Steffen D."/>
            <person name="Sodergren E."/>
            <person name="Wheeler D.A."/>
            <person name="Worley K.C."/>
            <person name="Ainscough R."/>
            <person name="Ambrose K.D."/>
            <person name="Ansari-Lari M.A."/>
            <person name="Aradhya S."/>
            <person name="Ashwell R.I."/>
            <person name="Babbage A.K."/>
            <person name="Bagguley C.L."/>
            <person name="Ballabio A."/>
            <person name="Banerjee R."/>
            <person name="Barker G.E."/>
            <person name="Barlow K.F."/>
            <person name="Barrett I.P."/>
            <person name="Bates K.N."/>
            <person name="Beare D.M."/>
            <person name="Beasley H."/>
            <person name="Beasley O."/>
            <person name="Beck A."/>
            <person name="Bethel G."/>
            <person name="Blechschmidt K."/>
            <person name="Brady N."/>
            <person name="Bray-Allen S."/>
            <person name="Bridgeman A.M."/>
            <person name="Brown A.J."/>
            <person name="Brown M.J."/>
            <person name="Bonnin D."/>
            <person name="Bruford E.A."/>
            <person name="Buhay C."/>
            <person name="Burch P."/>
            <person name="Burford D."/>
            <person name="Burgess J."/>
            <person name="Burrill W."/>
            <person name="Burton J."/>
            <person name="Bye J.M."/>
            <person name="Carder C."/>
            <person name="Carrel L."/>
            <person name="Chako J."/>
            <person name="Chapman J.C."/>
            <person name="Chavez D."/>
            <person name="Chen E."/>
            <person name="Chen G."/>
            <person name="Chen Y."/>
            <person name="Chen Z."/>
            <person name="Chinault C."/>
            <person name="Ciccodicola A."/>
            <person name="Clark S.Y."/>
            <person name="Clarke G."/>
            <person name="Clee C.M."/>
            <person name="Clegg S."/>
            <person name="Clerc-Blankenburg K."/>
            <person name="Clifford K."/>
            <person name="Cobley V."/>
            <person name="Cole C.G."/>
            <person name="Conquer J.S."/>
            <person name="Corby N."/>
            <person name="Connor R.E."/>
            <person name="David R."/>
            <person name="Davies J."/>
            <person name="Davis C."/>
            <person name="Davis J."/>
            <person name="Delgado O."/>
            <person name="Deshazo D."/>
            <person name="Dhami P."/>
            <person name="Ding Y."/>
            <person name="Dinh H."/>
            <person name="Dodsworth S."/>
            <person name="Draper H."/>
            <person name="Dugan-Rocha S."/>
            <person name="Dunham A."/>
            <person name="Dunn M."/>
            <person name="Durbin K.J."/>
            <person name="Dutta I."/>
            <person name="Eades T."/>
            <person name="Ellwood M."/>
            <person name="Emery-Cohen A."/>
            <person name="Errington H."/>
            <person name="Evans K.L."/>
            <person name="Faulkner L."/>
            <person name="Francis F."/>
            <person name="Frankland J."/>
            <person name="Fraser A.E."/>
            <person name="Galgoczy P."/>
            <person name="Gilbert J."/>
            <person name="Gill R."/>
            <person name="Gloeckner G."/>
            <person name="Gregory S.G."/>
            <person name="Gribble S."/>
            <person name="Griffiths C."/>
            <person name="Grocock R."/>
            <person name="Gu Y."/>
            <person name="Gwilliam R."/>
            <person name="Hamilton C."/>
            <person name="Hart E.A."/>
            <person name="Hawes A."/>
            <person name="Heath P.D."/>
            <person name="Heitmann K."/>
            <person name="Hennig S."/>
            <person name="Hernandez J."/>
            <person name="Hinzmann B."/>
            <person name="Ho S."/>
            <person name="Hoffs M."/>
            <person name="Howden P.J."/>
            <person name="Huckle E.J."/>
            <person name="Hume J."/>
            <person name="Hunt P.J."/>
            <person name="Hunt A.R."/>
            <person name="Isherwood J."/>
            <person name="Jacob L."/>
            <person name="Johnson D."/>
            <person name="Jones S."/>
            <person name="de Jong P.J."/>
            <person name="Joseph S.S."/>
            <person name="Keenan S."/>
            <person name="Kelly S."/>
            <person name="Kershaw J.K."/>
            <person name="Khan Z."/>
            <person name="Kioschis P."/>
            <person name="Klages S."/>
            <person name="Knights A.J."/>
            <person name="Kosiura A."/>
            <person name="Kovar-Smith C."/>
            <person name="Laird G.K."/>
            <person name="Langford C."/>
            <person name="Lawlor S."/>
            <person name="Leversha M."/>
            <person name="Lewis L."/>
            <person name="Liu W."/>
            <person name="Lloyd C."/>
            <person name="Lloyd D.M."/>
            <person name="Loulseged H."/>
            <person name="Loveland J.E."/>
            <person name="Lovell J.D."/>
            <person name="Lozado R."/>
            <person name="Lu J."/>
            <person name="Lyne R."/>
            <person name="Ma J."/>
            <person name="Maheshwari M."/>
            <person name="Matthews L.H."/>
            <person name="McDowall J."/>
            <person name="McLaren S."/>
            <person name="McMurray A."/>
            <person name="Meidl P."/>
            <person name="Meitinger T."/>
            <person name="Milne S."/>
            <person name="Miner G."/>
            <person name="Mistry S.L."/>
            <person name="Morgan M."/>
            <person name="Morris S."/>
            <person name="Mueller I."/>
            <person name="Mullikin J.C."/>
            <person name="Nguyen N."/>
            <person name="Nordsiek G."/>
            <person name="Nyakatura G."/>
            <person name="O'dell C.N."/>
            <person name="Okwuonu G."/>
            <person name="Palmer S."/>
            <person name="Pandian R."/>
            <person name="Parker D."/>
            <person name="Parrish J."/>
            <person name="Pasternak S."/>
            <person name="Patel D."/>
            <person name="Pearce A.V."/>
            <person name="Pearson D.M."/>
            <person name="Pelan S.E."/>
            <person name="Perez L."/>
            <person name="Porter K.M."/>
            <person name="Ramsey Y."/>
            <person name="Reichwald K."/>
            <person name="Rhodes S."/>
            <person name="Ridler K.A."/>
            <person name="Schlessinger D."/>
            <person name="Schueler M.G."/>
            <person name="Sehra H.K."/>
            <person name="Shaw-Smith C."/>
            <person name="Shen H."/>
            <person name="Sheridan E.M."/>
            <person name="Shownkeen R."/>
            <person name="Skuce C.D."/>
            <person name="Smith M.L."/>
            <person name="Sotheran E.C."/>
            <person name="Steingruber H.E."/>
            <person name="Steward C.A."/>
            <person name="Storey R."/>
            <person name="Swann R.M."/>
            <person name="Swarbreck D."/>
            <person name="Tabor P.E."/>
            <person name="Taudien S."/>
            <person name="Taylor T."/>
            <person name="Teague B."/>
            <person name="Thomas K."/>
            <person name="Thorpe A."/>
            <person name="Timms K."/>
            <person name="Tracey A."/>
            <person name="Trevanion S."/>
            <person name="Tromans A.C."/>
            <person name="d'Urso M."/>
            <person name="Verduzco D."/>
            <person name="Villasana D."/>
            <person name="Waldron L."/>
            <person name="Wall M."/>
            <person name="Wang Q."/>
            <person name="Warren J."/>
            <person name="Warry G.L."/>
            <person name="Wei X."/>
            <person name="West A."/>
            <person name="Whitehead S.L."/>
            <person name="Whiteley M.N."/>
            <person name="Wilkinson J.E."/>
            <person name="Willey D.L."/>
            <person name="Williams G."/>
            <person name="Williams L."/>
            <person name="Williamson A."/>
            <person name="Williamson H."/>
            <person name="Wilming L."/>
            <person name="Woodmansey R.L."/>
            <person name="Wray P.W."/>
            <person name="Yen J."/>
            <person name="Zhang J."/>
            <person name="Zhou J."/>
            <person name="Zoghbi H."/>
            <person name="Zorilla S."/>
            <person name="Buck D."/>
            <person name="Reinhardt R."/>
            <person name="Poustka A."/>
            <person name="Rosenthal A."/>
            <person name="Lehrach H."/>
            <person name="Meindl A."/>
            <person name="Minx P.J."/>
            <person name="Hillier L.W."/>
            <person name="Willard H.F."/>
            <person name="Wilson R.K."/>
            <person name="Waterston R.H."/>
            <person name="Rice C.M."/>
            <person name="Vaudin M."/>
            <person name="Coulson A."/>
            <person name="Nelson D.L."/>
            <person name="Weinstock G."/>
            <person name="Sulston J.E."/>
            <person name="Durbin R.M."/>
            <person name="Hubbard T."/>
            <person name="Gibbs R.A."/>
            <person name="Beck S."/>
            <person name="Rogers J."/>
            <person name="Bentley D.R."/>
        </authorList>
    </citation>
    <scope>NUCLEOTIDE SEQUENCE [LARGE SCALE GENOMIC DNA]</scope>
</reference>
<reference key="4">
    <citation type="journal article" date="2004" name="Genome Res.">
        <title>The status, quality, and expansion of the NIH full-length cDNA project: the Mammalian Gene Collection (MGC).</title>
        <authorList>
            <consortium name="The MGC Project Team"/>
        </authorList>
    </citation>
    <scope>NUCLEOTIDE SEQUENCE [LARGE SCALE MRNA] (ISOFORM 3)</scope>
    <source>
        <tissue>Testis</tissue>
    </source>
</reference>
<reference key="5">
    <citation type="journal article" date="2008" name="J. Biol. Chem.">
        <title>Mastermind-like domain-containing 1 (MAMLD1 or CXorf6) transactivates the Hes3 promoter, augments testosterone production, and contains the SF1 target sequence.</title>
        <authorList>
            <person name="Fukami M."/>
            <person name="Wada Y."/>
            <person name="Okada M."/>
            <person name="Kato F."/>
            <person name="Katsumata N."/>
            <person name="Baba T."/>
            <person name="Morohashi K."/>
            <person name="Laporte J."/>
            <person name="Kitagawa M."/>
            <person name="Ogata T."/>
        </authorList>
    </citation>
    <scope>FUNCTION</scope>
    <scope>SUBCELLULAR LOCATION</scope>
    <scope>TISSUE SPECIFICITY</scope>
    <scope>INDUCTION BY NR5A1</scope>
    <scope>MUTAGENESIS OF LEU-176</scope>
</reference>
<reference key="6">
    <citation type="journal article" date="2006" name="Nat. Genet.">
        <title>CXorf6 is a causative gene for hypospadias.</title>
        <authorList>
            <person name="Fukami M."/>
            <person name="Wada Y."/>
            <person name="Miyabayashi K."/>
            <person name="Nishino I."/>
            <person name="Hasegawa T."/>
            <person name="Camerino G."/>
            <person name="Kretz C."/>
            <person name="Buj-Bello A."/>
            <person name="Laporte J."/>
            <person name="Yamada G."/>
            <person name="Morohashi K."/>
            <person name="Ogata T."/>
        </authorList>
    </citation>
    <scope>INVOLVEMENT IN HYSP2</scope>
    <scope>VARIANTS SER-359; ARG-580 AND SER-662</scope>
</reference>
<reference key="7">
    <citation type="journal article" date="2010" name="Sci. Signal.">
        <title>Quantitative phosphoproteomics reveals widespread full phosphorylation site occupancy during mitosis.</title>
        <authorList>
            <person name="Olsen J.V."/>
            <person name="Vermeulen M."/>
            <person name="Santamaria A."/>
            <person name="Kumar C."/>
            <person name="Miller M.L."/>
            <person name="Jensen L.J."/>
            <person name="Gnad F."/>
            <person name="Cox J."/>
            <person name="Jensen T.S."/>
            <person name="Nigg E.A."/>
            <person name="Brunak S."/>
            <person name="Mann M."/>
        </authorList>
    </citation>
    <scope>PHOSPHORYLATION [LARGE SCALE ANALYSIS] AT SER-676</scope>
    <scope>IDENTIFICATION BY MASS SPECTROMETRY [LARGE SCALE ANALYSIS]</scope>
    <source>
        <tissue>Cervix carcinoma</tissue>
    </source>
</reference>
<reference key="8">
    <citation type="journal article" date="2013" name="J. Proteome Res.">
        <title>Toward a comprehensive characterization of a human cancer cell phosphoproteome.</title>
        <authorList>
            <person name="Zhou H."/>
            <person name="Di Palma S."/>
            <person name="Preisinger C."/>
            <person name="Peng M."/>
            <person name="Polat A.N."/>
            <person name="Heck A.J."/>
            <person name="Mohammed S."/>
        </authorList>
    </citation>
    <scope>PHOSPHORYLATION [LARGE SCALE ANALYSIS] AT SER-676</scope>
    <scope>IDENTIFICATION BY MASS SPECTROMETRY [LARGE SCALE ANALYSIS]</scope>
    <source>
        <tissue>Cervix carcinoma</tissue>
    </source>
</reference>
<evidence type="ECO:0000256" key="1">
    <source>
        <dbReference type="SAM" id="MobiDB-lite"/>
    </source>
</evidence>
<evidence type="ECO:0000269" key="2">
    <source>
    </source>
</evidence>
<evidence type="ECO:0000269" key="3">
    <source>
    </source>
</evidence>
<evidence type="ECO:0000303" key="4">
    <source>
    </source>
</evidence>
<evidence type="ECO:0000303" key="5">
    <source>
    </source>
</evidence>
<evidence type="ECO:0000305" key="6"/>
<evidence type="ECO:0007744" key="7">
    <source>
    </source>
</evidence>
<evidence type="ECO:0007744" key="8">
    <source>
    </source>
</evidence>
<name>MAMD1_HUMAN</name>